<keyword id="KW-0007">Acetylation</keyword>
<keyword id="KW-0143">Chaperone</keyword>
<keyword id="KW-0963">Cytoplasm</keyword>
<keyword id="KW-0256">Endoplasmic reticulum</keyword>
<keyword id="KW-0449">Lipoprotein</keyword>
<keyword id="KW-0472">Membrane</keyword>
<keyword id="KW-0479">Metal-binding</keyword>
<keyword id="KW-0488">Methylation</keyword>
<keyword id="KW-0492">Microsome</keyword>
<keyword id="KW-0496">Mitochondrion</keyword>
<keyword id="KW-0539">Nucleus</keyword>
<keyword id="KW-0597">Phosphoprotein</keyword>
<keyword id="KW-0636">Prenylation</keyword>
<keyword id="KW-1185">Reference proteome</keyword>
<keyword id="KW-0677">Repeat</keyword>
<keyword id="KW-0862">Zinc</keyword>
<keyword id="KW-0863">Zinc-finger</keyword>
<proteinExistence type="evidence at transcript level"/>
<feature type="chain" id="PRO_0000239805" description="DnaJ homolog subfamily A member 1">
    <location>
        <begin position="1"/>
        <end position="394"/>
    </location>
</feature>
<feature type="propeptide" id="PRO_0000396751" description="Removed in mature form" evidence="1">
    <location>
        <begin position="395"/>
        <end position="397"/>
    </location>
</feature>
<feature type="domain" description="J">
    <location>
        <begin position="6"/>
        <end position="68"/>
    </location>
</feature>
<feature type="repeat" description="CXXCXGXG motif">
    <location>
        <begin position="134"/>
        <end position="141"/>
    </location>
</feature>
<feature type="repeat" description="CXXCXGXG motif">
    <location>
        <begin position="150"/>
        <end position="157"/>
    </location>
</feature>
<feature type="repeat" description="CXXCXGXG motif">
    <location>
        <begin position="177"/>
        <end position="184"/>
    </location>
</feature>
<feature type="repeat" description="CXXCXGXG motif">
    <location>
        <begin position="193"/>
        <end position="200"/>
    </location>
</feature>
<feature type="zinc finger region" description="CR-type">
    <location>
        <begin position="121"/>
        <end position="205"/>
    </location>
</feature>
<feature type="region of interest" description="Disordered" evidence="3">
    <location>
        <begin position="352"/>
        <end position="397"/>
    </location>
</feature>
<feature type="compositionally biased region" description="Acidic residues" evidence="3">
    <location>
        <begin position="353"/>
        <end position="365"/>
    </location>
</feature>
<feature type="binding site" evidence="1">
    <location>
        <position position="134"/>
    </location>
    <ligand>
        <name>Zn(2+)</name>
        <dbReference type="ChEBI" id="CHEBI:29105"/>
        <label>1</label>
    </ligand>
</feature>
<feature type="binding site" evidence="1">
    <location>
        <position position="137"/>
    </location>
    <ligand>
        <name>Zn(2+)</name>
        <dbReference type="ChEBI" id="CHEBI:29105"/>
        <label>1</label>
    </ligand>
</feature>
<feature type="binding site" evidence="1">
    <location>
        <position position="150"/>
    </location>
    <ligand>
        <name>Zn(2+)</name>
        <dbReference type="ChEBI" id="CHEBI:29105"/>
        <label>2</label>
    </ligand>
</feature>
<feature type="binding site" evidence="1">
    <location>
        <position position="153"/>
    </location>
    <ligand>
        <name>Zn(2+)</name>
        <dbReference type="ChEBI" id="CHEBI:29105"/>
        <label>2</label>
    </ligand>
</feature>
<feature type="binding site" evidence="1">
    <location>
        <position position="177"/>
    </location>
    <ligand>
        <name>Zn(2+)</name>
        <dbReference type="ChEBI" id="CHEBI:29105"/>
        <label>2</label>
    </ligand>
</feature>
<feature type="binding site" evidence="1">
    <location>
        <position position="180"/>
    </location>
    <ligand>
        <name>Zn(2+)</name>
        <dbReference type="ChEBI" id="CHEBI:29105"/>
        <label>2</label>
    </ligand>
</feature>
<feature type="binding site" evidence="1">
    <location>
        <position position="193"/>
    </location>
    <ligand>
        <name>Zn(2+)</name>
        <dbReference type="ChEBI" id="CHEBI:29105"/>
        <label>1</label>
    </ligand>
</feature>
<feature type="binding site" evidence="1">
    <location>
        <position position="196"/>
    </location>
    <ligand>
        <name>Zn(2+)</name>
        <dbReference type="ChEBI" id="CHEBI:29105"/>
        <label>1</label>
    </ligand>
</feature>
<feature type="modified residue" description="N6-acetyllysine" evidence="2">
    <location>
        <position position="66"/>
    </location>
</feature>
<feature type="modified residue" description="Phosphoserine" evidence="2">
    <location>
        <position position="83"/>
    </location>
</feature>
<feature type="modified residue" description="Phosphoserine" evidence="2">
    <location>
        <position position="335"/>
    </location>
</feature>
<feature type="modified residue" description="Phosphotyrosine" evidence="2">
    <location>
        <position position="381"/>
    </location>
</feature>
<feature type="modified residue" description="Cysteine methyl ester" evidence="1">
    <location>
        <position position="394"/>
    </location>
</feature>
<feature type="lipid moiety-binding region" description="S-farnesyl cysteine" evidence="1">
    <location>
        <position position="394"/>
    </location>
</feature>
<feature type="sequence conflict" description="In Ref. 1; AAX09083." evidence="4" ref="1">
    <original>Q</original>
    <variation>H</variation>
    <location>
        <position position="99"/>
    </location>
</feature>
<feature type="sequence conflict" description="In Ref. 1; AAX09083." evidence="4" ref="1">
    <original>QG</original>
    <variation>HC</variation>
    <location>
        <begin position="181"/>
        <end position="182"/>
    </location>
</feature>
<feature type="sequence conflict" description="In Ref. 1; AAX09083." evidence="4" ref="1">
    <original>S</original>
    <variation>T</variation>
    <location>
        <position position="188"/>
    </location>
</feature>
<dbReference type="EMBL" id="BT021066">
    <property type="protein sequence ID" value="AAX09083.1"/>
    <property type="molecule type" value="mRNA"/>
</dbReference>
<dbReference type="EMBL" id="BC102711">
    <property type="protein sequence ID" value="AAI02712.1"/>
    <property type="molecule type" value="mRNA"/>
</dbReference>
<dbReference type="RefSeq" id="NP_001015637.1">
    <property type="nucleotide sequence ID" value="NM_001015637.1"/>
</dbReference>
<dbReference type="BMRB" id="Q5E954"/>
<dbReference type="SMR" id="Q5E954"/>
<dbReference type="FunCoup" id="Q5E954">
    <property type="interactions" value="3133"/>
</dbReference>
<dbReference type="STRING" id="9913.ENSBTAP00000021637"/>
<dbReference type="PaxDb" id="9913-ENSBTAP00000021637"/>
<dbReference type="PeptideAtlas" id="Q5E954"/>
<dbReference type="Ensembl" id="ENSBTAT00000021637.5">
    <property type="protein sequence ID" value="ENSBTAP00000021637.4"/>
    <property type="gene ID" value="ENSBTAG00000016265.7"/>
</dbReference>
<dbReference type="GeneID" id="528862"/>
<dbReference type="KEGG" id="bta:528862"/>
<dbReference type="CTD" id="3301"/>
<dbReference type="VEuPathDB" id="HostDB:ENSBTAG00000016265"/>
<dbReference type="VGNC" id="VGNC:56944">
    <property type="gene designation" value="DNAJA1"/>
</dbReference>
<dbReference type="eggNOG" id="KOG0712">
    <property type="taxonomic scope" value="Eukaryota"/>
</dbReference>
<dbReference type="GeneTree" id="ENSGT00940000153558"/>
<dbReference type="HOGENOM" id="CLU_017633_10_0_1"/>
<dbReference type="InParanoid" id="Q5E954"/>
<dbReference type="OMA" id="NALCTKC"/>
<dbReference type="OrthoDB" id="550424at2759"/>
<dbReference type="TreeFam" id="TF105141"/>
<dbReference type="Reactome" id="R-BTA-3371497">
    <property type="pathway name" value="HSP90 chaperone cycle for steroid hormone receptors (SHR) in the presence of ligand"/>
</dbReference>
<dbReference type="Reactome" id="R-BTA-9841251">
    <property type="pathway name" value="Mitochondrial unfolded protein response (UPRmt)"/>
</dbReference>
<dbReference type="Proteomes" id="UP000009136">
    <property type="component" value="Chromosome 8"/>
</dbReference>
<dbReference type="Bgee" id="ENSBTAG00000016265">
    <property type="expression patterns" value="Expressed in spermatid and 104 other cell types or tissues"/>
</dbReference>
<dbReference type="GO" id="GO:0005737">
    <property type="term" value="C:cytoplasm"/>
    <property type="evidence" value="ECO:0000318"/>
    <property type="project" value="GO_Central"/>
</dbReference>
<dbReference type="GO" id="GO:0005829">
    <property type="term" value="C:cytosol"/>
    <property type="evidence" value="ECO:0000318"/>
    <property type="project" value="GO_Central"/>
</dbReference>
<dbReference type="GO" id="GO:0005783">
    <property type="term" value="C:endoplasmic reticulum"/>
    <property type="evidence" value="ECO:0007669"/>
    <property type="project" value="UniProtKB-KW"/>
</dbReference>
<dbReference type="GO" id="GO:0016020">
    <property type="term" value="C:membrane"/>
    <property type="evidence" value="ECO:0007669"/>
    <property type="project" value="UniProtKB-SubCell"/>
</dbReference>
<dbReference type="GO" id="GO:0005739">
    <property type="term" value="C:mitochondrion"/>
    <property type="evidence" value="ECO:0007669"/>
    <property type="project" value="UniProtKB-SubCell"/>
</dbReference>
<dbReference type="GO" id="GO:0005634">
    <property type="term" value="C:nucleus"/>
    <property type="evidence" value="ECO:0007669"/>
    <property type="project" value="UniProtKB-SubCell"/>
</dbReference>
<dbReference type="GO" id="GO:0048471">
    <property type="term" value="C:perinuclear region of cytoplasm"/>
    <property type="evidence" value="ECO:0007669"/>
    <property type="project" value="UniProtKB-SubCell"/>
</dbReference>
<dbReference type="GO" id="GO:0005524">
    <property type="term" value="F:ATP binding"/>
    <property type="evidence" value="ECO:0007669"/>
    <property type="project" value="InterPro"/>
</dbReference>
<dbReference type="GO" id="GO:0001671">
    <property type="term" value="F:ATPase activator activity"/>
    <property type="evidence" value="ECO:0000250"/>
    <property type="project" value="UniProtKB"/>
</dbReference>
<dbReference type="GO" id="GO:0030544">
    <property type="term" value="F:Hsp70 protein binding"/>
    <property type="evidence" value="ECO:0000250"/>
    <property type="project" value="UniProtKB"/>
</dbReference>
<dbReference type="GO" id="GO:0050750">
    <property type="term" value="F:low-density lipoprotein particle receptor binding"/>
    <property type="evidence" value="ECO:0000250"/>
    <property type="project" value="AgBase"/>
</dbReference>
<dbReference type="GO" id="GO:0051087">
    <property type="term" value="F:protein-folding chaperone binding"/>
    <property type="evidence" value="ECO:0000250"/>
    <property type="project" value="UniProtKB"/>
</dbReference>
<dbReference type="GO" id="GO:0051082">
    <property type="term" value="F:unfolded protein binding"/>
    <property type="evidence" value="ECO:0007669"/>
    <property type="project" value="InterPro"/>
</dbReference>
<dbReference type="GO" id="GO:0008270">
    <property type="term" value="F:zinc ion binding"/>
    <property type="evidence" value="ECO:0007669"/>
    <property type="project" value="UniProtKB-KW"/>
</dbReference>
<dbReference type="GO" id="GO:0030521">
    <property type="term" value="P:androgen receptor signaling pathway"/>
    <property type="evidence" value="ECO:0000250"/>
    <property type="project" value="AgBase"/>
</dbReference>
<dbReference type="GO" id="GO:0030317">
    <property type="term" value="P:flagellated sperm motility"/>
    <property type="evidence" value="ECO:0000250"/>
    <property type="project" value="AgBase"/>
</dbReference>
<dbReference type="GO" id="GO:0043066">
    <property type="term" value="P:negative regulation of apoptotic process"/>
    <property type="evidence" value="ECO:0000250"/>
    <property type="project" value="UniProtKB"/>
</dbReference>
<dbReference type="GO" id="GO:0043508">
    <property type="term" value="P:negative regulation of JUN kinase activity"/>
    <property type="evidence" value="ECO:0000250"/>
    <property type="project" value="UniProtKB"/>
</dbReference>
<dbReference type="GO" id="GO:0043065">
    <property type="term" value="P:positive regulation of apoptotic process"/>
    <property type="evidence" value="ECO:0000250"/>
    <property type="project" value="UniProtKB"/>
</dbReference>
<dbReference type="GO" id="GO:0070585">
    <property type="term" value="P:protein localization to mitochondrion"/>
    <property type="evidence" value="ECO:0000250"/>
    <property type="project" value="UniProtKB"/>
</dbReference>
<dbReference type="GO" id="GO:0042026">
    <property type="term" value="P:protein refolding"/>
    <property type="evidence" value="ECO:0000318"/>
    <property type="project" value="GO_Central"/>
</dbReference>
<dbReference type="GO" id="GO:0051223">
    <property type="term" value="P:regulation of protein transport"/>
    <property type="evidence" value="ECO:0000250"/>
    <property type="project" value="UniProtKB"/>
</dbReference>
<dbReference type="GO" id="GO:0009408">
    <property type="term" value="P:response to heat"/>
    <property type="evidence" value="ECO:0007669"/>
    <property type="project" value="InterPro"/>
</dbReference>
<dbReference type="GO" id="GO:0007283">
    <property type="term" value="P:spermatogenesis"/>
    <property type="evidence" value="ECO:0000250"/>
    <property type="project" value="AgBase"/>
</dbReference>
<dbReference type="CDD" id="cd06257">
    <property type="entry name" value="DnaJ"/>
    <property type="match status" value="1"/>
</dbReference>
<dbReference type="CDD" id="cd10747">
    <property type="entry name" value="DnaJ_C"/>
    <property type="match status" value="1"/>
</dbReference>
<dbReference type="CDD" id="cd10719">
    <property type="entry name" value="DnaJ_zf"/>
    <property type="match status" value="1"/>
</dbReference>
<dbReference type="FunFam" id="2.60.260.20:FF:000068">
    <property type="entry name" value="Chaperone protein dnaJ 3"/>
    <property type="match status" value="1"/>
</dbReference>
<dbReference type="FunFam" id="2.10.230.10:FF:000005">
    <property type="entry name" value="DnaJ homolog subfamily A member 1"/>
    <property type="match status" value="1"/>
</dbReference>
<dbReference type="FunFam" id="1.10.287.110:FF:000014">
    <property type="entry name" value="dnaJ homolog subfamily A member 1"/>
    <property type="match status" value="1"/>
</dbReference>
<dbReference type="FunFam" id="2.60.260.20:FF:000003">
    <property type="entry name" value="DnaJ subfamily A member 2"/>
    <property type="match status" value="1"/>
</dbReference>
<dbReference type="Gene3D" id="1.10.287.110">
    <property type="entry name" value="DnaJ domain"/>
    <property type="match status" value="1"/>
</dbReference>
<dbReference type="Gene3D" id="2.10.230.10">
    <property type="entry name" value="Heat shock protein DnaJ, cysteine-rich domain"/>
    <property type="match status" value="1"/>
</dbReference>
<dbReference type="Gene3D" id="2.60.260.20">
    <property type="entry name" value="Urease metallochaperone UreE, N-terminal domain"/>
    <property type="match status" value="2"/>
</dbReference>
<dbReference type="HAMAP" id="MF_01152">
    <property type="entry name" value="DnaJ"/>
    <property type="match status" value="1"/>
</dbReference>
<dbReference type="InterPro" id="IPR012724">
    <property type="entry name" value="DnaJ"/>
</dbReference>
<dbReference type="InterPro" id="IPR002939">
    <property type="entry name" value="DnaJ_C"/>
</dbReference>
<dbReference type="InterPro" id="IPR001623">
    <property type="entry name" value="DnaJ_domain"/>
</dbReference>
<dbReference type="InterPro" id="IPR018253">
    <property type="entry name" value="DnaJ_domain_CS"/>
</dbReference>
<dbReference type="InterPro" id="IPR044713">
    <property type="entry name" value="DNJA1/2-like"/>
</dbReference>
<dbReference type="InterPro" id="IPR008971">
    <property type="entry name" value="HSP40/DnaJ_pept-bd"/>
</dbReference>
<dbReference type="InterPro" id="IPR001305">
    <property type="entry name" value="HSP_DnaJ_Cys-rich_dom"/>
</dbReference>
<dbReference type="InterPro" id="IPR036410">
    <property type="entry name" value="HSP_DnaJ_Cys-rich_dom_sf"/>
</dbReference>
<dbReference type="InterPro" id="IPR036869">
    <property type="entry name" value="J_dom_sf"/>
</dbReference>
<dbReference type="PANTHER" id="PTHR43888">
    <property type="entry name" value="DNAJ-LIKE-2, ISOFORM A-RELATED"/>
    <property type="match status" value="1"/>
</dbReference>
<dbReference type="Pfam" id="PF00226">
    <property type="entry name" value="DnaJ"/>
    <property type="match status" value="1"/>
</dbReference>
<dbReference type="Pfam" id="PF01556">
    <property type="entry name" value="DnaJ_C"/>
    <property type="match status" value="1"/>
</dbReference>
<dbReference type="Pfam" id="PF00684">
    <property type="entry name" value="DnaJ_CXXCXGXG"/>
    <property type="match status" value="1"/>
</dbReference>
<dbReference type="PRINTS" id="PR00625">
    <property type="entry name" value="JDOMAIN"/>
</dbReference>
<dbReference type="SMART" id="SM00271">
    <property type="entry name" value="DnaJ"/>
    <property type="match status" value="1"/>
</dbReference>
<dbReference type="SUPFAM" id="SSF46565">
    <property type="entry name" value="Chaperone J-domain"/>
    <property type="match status" value="1"/>
</dbReference>
<dbReference type="SUPFAM" id="SSF57938">
    <property type="entry name" value="DnaJ/Hsp40 cysteine-rich domain"/>
    <property type="match status" value="1"/>
</dbReference>
<dbReference type="SUPFAM" id="SSF49493">
    <property type="entry name" value="HSP40/DnaJ peptide-binding domain"/>
    <property type="match status" value="2"/>
</dbReference>
<dbReference type="PROSITE" id="PS00636">
    <property type="entry name" value="DNAJ_1"/>
    <property type="match status" value="1"/>
</dbReference>
<dbReference type="PROSITE" id="PS50076">
    <property type="entry name" value="DNAJ_2"/>
    <property type="match status" value="1"/>
</dbReference>
<dbReference type="PROSITE" id="PS51188">
    <property type="entry name" value="ZF_CR"/>
    <property type="match status" value="1"/>
</dbReference>
<reference key="1">
    <citation type="journal article" date="2005" name="BMC Genomics">
        <title>Characterization of 954 bovine full-CDS cDNA sequences.</title>
        <authorList>
            <person name="Harhay G.P."/>
            <person name="Sonstegard T.S."/>
            <person name="Keele J.W."/>
            <person name="Heaton M.P."/>
            <person name="Clawson M.L."/>
            <person name="Snelling W.M."/>
            <person name="Wiedmann R.T."/>
            <person name="Van Tassell C.P."/>
            <person name="Smith T.P.L."/>
        </authorList>
    </citation>
    <scope>NUCLEOTIDE SEQUENCE [LARGE SCALE MRNA]</scope>
</reference>
<reference key="2">
    <citation type="submission" date="2005-08" db="EMBL/GenBank/DDBJ databases">
        <authorList>
            <consortium name="NIH - Mammalian Gene Collection (MGC) project"/>
        </authorList>
    </citation>
    <scope>NUCLEOTIDE SEQUENCE [LARGE SCALE MRNA]</scope>
    <source>
        <strain>Crossbred X Angus</strain>
        <tissue>Liver</tissue>
    </source>
</reference>
<evidence type="ECO:0000250" key="1"/>
<evidence type="ECO:0000250" key="2">
    <source>
        <dbReference type="UniProtKB" id="P31689"/>
    </source>
</evidence>
<evidence type="ECO:0000256" key="3">
    <source>
        <dbReference type="SAM" id="MobiDB-lite"/>
    </source>
</evidence>
<evidence type="ECO:0000305" key="4"/>
<comment type="function">
    <text evidence="1">Co-chaperone for HSPA8/Hsc70. Plays a role in protein transport into mitochondria via its role as co-chaperone. Functions as co-chaperone for HSPA1B and negatively regulates the translocation of BAX from the cytosol to mitochondria in response to cellular stress, thereby protecting cells against apoptosis. Stimulates ATP hydrolysis, but not the folding of unfolded proteins mediated by HSPA1A (in vitro). Promotes apoptosis in response to cellular stress mediated by exposure to anisomycin or UV (By similarity).</text>
</comment>
<comment type="subunit">
    <text evidence="2">Identified in a complex with HSPA1B and BAX. Interacts with RNF207.</text>
</comment>
<comment type="subcellular location">
    <subcellularLocation>
        <location evidence="1">Membrane</location>
        <topology evidence="1">Lipid-anchor</topology>
    </subcellularLocation>
    <subcellularLocation>
        <location evidence="1">Cytoplasm</location>
    </subcellularLocation>
    <subcellularLocation>
        <location evidence="1">Microsome</location>
    </subcellularLocation>
    <subcellularLocation>
        <location evidence="1">Mitochondrion</location>
    </subcellularLocation>
    <subcellularLocation>
        <location evidence="1">Nucleus</location>
    </subcellularLocation>
    <subcellularLocation>
        <location evidence="1">Cytoplasm</location>
        <location evidence="1">Perinuclear region</location>
    </subcellularLocation>
    <text evidence="1">Primarily cytoplasmic and associated with microsomes. A minor proportion is associated with nuclei and mitochondria (By similarity).</text>
</comment>
<gene>
    <name type="primary">DNAJA1</name>
</gene>
<protein>
    <recommendedName>
        <fullName>DnaJ homolog subfamily A member 1</fullName>
    </recommendedName>
</protein>
<organism>
    <name type="scientific">Bos taurus</name>
    <name type="common">Bovine</name>
    <dbReference type="NCBI Taxonomy" id="9913"/>
    <lineage>
        <taxon>Eukaryota</taxon>
        <taxon>Metazoa</taxon>
        <taxon>Chordata</taxon>
        <taxon>Craniata</taxon>
        <taxon>Vertebrata</taxon>
        <taxon>Euteleostomi</taxon>
        <taxon>Mammalia</taxon>
        <taxon>Eutheria</taxon>
        <taxon>Laurasiatheria</taxon>
        <taxon>Artiodactyla</taxon>
        <taxon>Ruminantia</taxon>
        <taxon>Pecora</taxon>
        <taxon>Bovidae</taxon>
        <taxon>Bovinae</taxon>
        <taxon>Bos</taxon>
    </lineage>
</organism>
<accession>Q5E954</accession>
<accession>Q3SZU2</accession>
<name>DNJA1_BOVIN</name>
<sequence>MVKETTYYDVLGVKPNATQEELKKAYRKLALKYHPDKNPNEGEKFKQISQAYEVLSDAKKRELYDKGGEQAIKEGGAGGGFGSPMDIFDMFFGGGGRMQRERRGKNVVHQLTVTLEDLYNGATRKLALQKNVICDKCEGRGGKKGAVECCPNCRGTGMQIRIHQIGPGMVQQIQSVCMECQGHGERISPKDRCKSCNGRKIVREKKILEVHIDKGMKDGQKITFHGEGDQEPGLEPGDIIIVLDQKDHAVFTRRGEDLFMCMDIQLVEALCGFQKPISTLDNRTIVITSHPGQIVKHGDIKCVLNEGMPIYRRPYEKGRLIIEFKVNFPENGFLSPDKLSLLEKLLPERKEVEETDEMDQVELVDFDPNQERRRHYNGEAYEDDEHHPRGGVQCQTS</sequence>